<evidence type="ECO:0000255" key="1">
    <source>
        <dbReference type="HAMAP-Rule" id="MF_00260"/>
    </source>
</evidence>
<feature type="chain" id="PRO_0000304244" description="Porphobilinogen deaminase">
    <location>
        <begin position="1"/>
        <end position="321"/>
    </location>
</feature>
<feature type="modified residue" description="S-(dipyrrolylmethanemethyl)cysteine" evidence="1">
    <location>
        <position position="243"/>
    </location>
</feature>
<organism>
    <name type="scientific">Histophilus somni (strain 129Pt)</name>
    <name type="common">Haemophilus somnus</name>
    <dbReference type="NCBI Taxonomy" id="205914"/>
    <lineage>
        <taxon>Bacteria</taxon>
        <taxon>Pseudomonadati</taxon>
        <taxon>Pseudomonadota</taxon>
        <taxon>Gammaproteobacteria</taxon>
        <taxon>Pasteurellales</taxon>
        <taxon>Pasteurellaceae</taxon>
        <taxon>Histophilus</taxon>
    </lineage>
</organism>
<dbReference type="EC" id="2.5.1.61" evidence="1"/>
<dbReference type="EMBL" id="CP000436">
    <property type="protein sequence ID" value="ABI24325.1"/>
    <property type="molecule type" value="Genomic_DNA"/>
</dbReference>
<dbReference type="SMR" id="Q0I178"/>
<dbReference type="KEGG" id="hso:HS_0044"/>
<dbReference type="eggNOG" id="COG0181">
    <property type="taxonomic scope" value="Bacteria"/>
</dbReference>
<dbReference type="HOGENOM" id="CLU_019704_0_2_6"/>
<dbReference type="UniPathway" id="UPA00251">
    <property type="reaction ID" value="UER00319"/>
</dbReference>
<dbReference type="GO" id="GO:0005737">
    <property type="term" value="C:cytoplasm"/>
    <property type="evidence" value="ECO:0007669"/>
    <property type="project" value="TreeGrafter"/>
</dbReference>
<dbReference type="GO" id="GO:0004418">
    <property type="term" value="F:hydroxymethylbilane synthase activity"/>
    <property type="evidence" value="ECO:0007669"/>
    <property type="project" value="UniProtKB-UniRule"/>
</dbReference>
<dbReference type="GO" id="GO:0006782">
    <property type="term" value="P:protoporphyrinogen IX biosynthetic process"/>
    <property type="evidence" value="ECO:0007669"/>
    <property type="project" value="UniProtKB-UniRule"/>
</dbReference>
<dbReference type="CDD" id="cd13646">
    <property type="entry name" value="PBP2_EcHMBS_like"/>
    <property type="match status" value="1"/>
</dbReference>
<dbReference type="FunFam" id="3.30.160.40:FF:000002">
    <property type="entry name" value="Porphobilinogen deaminase"/>
    <property type="match status" value="1"/>
</dbReference>
<dbReference type="FunFam" id="3.40.190.10:FF:000004">
    <property type="entry name" value="Porphobilinogen deaminase"/>
    <property type="match status" value="1"/>
</dbReference>
<dbReference type="FunFam" id="3.40.190.10:FF:000005">
    <property type="entry name" value="Porphobilinogen deaminase"/>
    <property type="match status" value="1"/>
</dbReference>
<dbReference type="Gene3D" id="3.40.190.10">
    <property type="entry name" value="Periplasmic binding protein-like II"/>
    <property type="match status" value="2"/>
</dbReference>
<dbReference type="Gene3D" id="3.30.160.40">
    <property type="entry name" value="Porphobilinogen deaminase, C-terminal domain"/>
    <property type="match status" value="1"/>
</dbReference>
<dbReference type="HAMAP" id="MF_00260">
    <property type="entry name" value="Porphobil_deam"/>
    <property type="match status" value="1"/>
</dbReference>
<dbReference type="InterPro" id="IPR000860">
    <property type="entry name" value="HemC"/>
</dbReference>
<dbReference type="InterPro" id="IPR022419">
    <property type="entry name" value="Porphobilin_deaminase_cofac_BS"/>
</dbReference>
<dbReference type="InterPro" id="IPR022417">
    <property type="entry name" value="Porphobilin_deaminase_N"/>
</dbReference>
<dbReference type="InterPro" id="IPR022418">
    <property type="entry name" value="Porphobilinogen_deaminase_C"/>
</dbReference>
<dbReference type="InterPro" id="IPR036803">
    <property type="entry name" value="Porphobilinogen_deaminase_C_sf"/>
</dbReference>
<dbReference type="NCBIfam" id="TIGR00212">
    <property type="entry name" value="hemC"/>
    <property type="match status" value="1"/>
</dbReference>
<dbReference type="PANTHER" id="PTHR11557">
    <property type="entry name" value="PORPHOBILINOGEN DEAMINASE"/>
    <property type="match status" value="1"/>
</dbReference>
<dbReference type="PANTHER" id="PTHR11557:SF0">
    <property type="entry name" value="PORPHOBILINOGEN DEAMINASE"/>
    <property type="match status" value="1"/>
</dbReference>
<dbReference type="Pfam" id="PF01379">
    <property type="entry name" value="Porphobil_deam"/>
    <property type="match status" value="1"/>
</dbReference>
<dbReference type="Pfam" id="PF03900">
    <property type="entry name" value="Porphobil_deamC"/>
    <property type="match status" value="1"/>
</dbReference>
<dbReference type="PIRSF" id="PIRSF001438">
    <property type="entry name" value="4pyrrol_synth_OHMeBilane_synth"/>
    <property type="match status" value="1"/>
</dbReference>
<dbReference type="PRINTS" id="PR00151">
    <property type="entry name" value="PORPHBDMNASE"/>
</dbReference>
<dbReference type="SUPFAM" id="SSF53850">
    <property type="entry name" value="Periplasmic binding protein-like II"/>
    <property type="match status" value="1"/>
</dbReference>
<dbReference type="SUPFAM" id="SSF54782">
    <property type="entry name" value="Porphobilinogen deaminase (hydroxymethylbilane synthase), C-terminal domain"/>
    <property type="match status" value="1"/>
</dbReference>
<dbReference type="PROSITE" id="PS00533">
    <property type="entry name" value="PORPHOBILINOGEN_DEAM"/>
    <property type="match status" value="1"/>
</dbReference>
<comment type="function">
    <text evidence="1">Tetrapolymerization of the monopyrrole PBG into the hydroxymethylbilane pre-uroporphyrinogen in several discrete steps.</text>
</comment>
<comment type="catalytic activity">
    <reaction evidence="1">
        <text>4 porphobilinogen + H2O = hydroxymethylbilane + 4 NH4(+)</text>
        <dbReference type="Rhea" id="RHEA:13185"/>
        <dbReference type="ChEBI" id="CHEBI:15377"/>
        <dbReference type="ChEBI" id="CHEBI:28938"/>
        <dbReference type="ChEBI" id="CHEBI:57845"/>
        <dbReference type="ChEBI" id="CHEBI:58126"/>
        <dbReference type="EC" id="2.5.1.61"/>
    </reaction>
</comment>
<comment type="cofactor">
    <cofactor evidence="1">
        <name>dipyrromethane</name>
        <dbReference type="ChEBI" id="CHEBI:60342"/>
    </cofactor>
    <text evidence="1">Binds 1 dipyrromethane group covalently.</text>
</comment>
<comment type="pathway">
    <text evidence="1">Porphyrin-containing compound metabolism; protoporphyrin-IX biosynthesis; coproporphyrinogen-III from 5-aminolevulinate: step 2/4.</text>
</comment>
<comment type="subunit">
    <text evidence="1">Monomer.</text>
</comment>
<comment type="miscellaneous">
    <text evidence="1">The porphobilinogen subunits are added to the dipyrromethane group.</text>
</comment>
<comment type="similarity">
    <text evidence="1">Belongs to the HMBS family.</text>
</comment>
<reference key="1">
    <citation type="journal article" date="2007" name="J. Bacteriol.">
        <title>Complete genome sequence of Haemophilus somnus (Histophilus somni) strain 129Pt and comparison to Haemophilus ducreyi 35000HP and Haemophilus influenzae Rd.</title>
        <authorList>
            <person name="Challacombe J.F."/>
            <person name="Duncan A.J."/>
            <person name="Brettin T.S."/>
            <person name="Bruce D."/>
            <person name="Chertkov O."/>
            <person name="Detter J.C."/>
            <person name="Han C.S."/>
            <person name="Misra M."/>
            <person name="Richardson P."/>
            <person name="Tapia R."/>
            <person name="Thayer N."/>
            <person name="Xie G."/>
            <person name="Inzana T.J."/>
        </authorList>
    </citation>
    <scope>NUCLEOTIDE SEQUENCE [LARGE SCALE GENOMIC DNA]</scope>
    <source>
        <strain>129Pt</strain>
    </source>
</reference>
<sequence length="321" mass="35317">MSINKTLKIATRQSPLALWQANYVKNRLQQRYSHLSVELVPIITKGDVILDTPLAKIGGKGLFVKELENALLNGEADIAVHSMKDVPMQFPKGLELSVICPREDPRDAFVSNKYRTLDELPQGAIVGTSSLRRQCQLKNWRADLDIRSLRGNVGTRLNKLDQGDYDAIILASAGLIRLGLTERIRSFIEIDTILPACGQGAVGIECRVDDRDVQSLLMPLADQTTTYCVLAERAMNFHLQGGCQVPIGAYAILENNQLYLRGLVGDVHGSQILSAEGQFELSLDFESSQSAVQKAEELGVSIAEQLLQQGADKILQAVYQS</sequence>
<protein>
    <recommendedName>
        <fullName evidence="1">Porphobilinogen deaminase</fullName>
        <shortName evidence="1">PBG</shortName>
        <ecNumber evidence="1">2.5.1.61</ecNumber>
    </recommendedName>
    <alternativeName>
        <fullName evidence="1">Hydroxymethylbilane synthase</fullName>
        <shortName evidence="1">HMBS</shortName>
    </alternativeName>
    <alternativeName>
        <fullName evidence="1">Pre-uroporphyrinogen synthase</fullName>
    </alternativeName>
</protein>
<name>HEM3_HISS1</name>
<keyword id="KW-0627">Porphyrin biosynthesis</keyword>
<keyword id="KW-0808">Transferase</keyword>
<proteinExistence type="inferred from homology"/>
<gene>
    <name evidence="1" type="primary">hemC</name>
    <name type="ordered locus">HS_0044</name>
</gene>
<accession>Q0I178</accession>